<keyword id="KW-1185">Reference proteome</keyword>
<dbReference type="EMBL" id="AE017282">
    <property type="protein sequence ID" value="AAU92206.1"/>
    <property type="molecule type" value="Genomic_DNA"/>
</dbReference>
<dbReference type="RefSeq" id="WP_010961041.1">
    <property type="nucleotide sequence ID" value="NC_002977.6"/>
</dbReference>
<dbReference type="SMR" id="Q607H2"/>
<dbReference type="STRING" id="243233.MCA1788"/>
<dbReference type="GeneID" id="88224036"/>
<dbReference type="KEGG" id="mca:MCA1788"/>
<dbReference type="eggNOG" id="COG2127">
    <property type="taxonomic scope" value="Bacteria"/>
</dbReference>
<dbReference type="HOGENOM" id="CLU_134358_2_1_6"/>
<dbReference type="Proteomes" id="UP000006821">
    <property type="component" value="Chromosome"/>
</dbReference>
<dbReference type="GO" id="GO:0030163">
    <property type="term" value="P:protein catabolic process"/>
    <property type="evidence" value="ECO:0007669"/>
    <property type="project" value="InterPro"/>
</dbReference>
<dbReference type="GO" id="GO:0006508">
    <property type="term" value="P:proteolysis"/>
    <property type="evidence" value="ECO:0007669"/>
    <property type="project" value="UniProtKB-UniRule"/>
</dbReference>
<dbReference type="FunFam" id="3.30.1390.10:FF:000002">
    <property type="entry name" value="ATP-dependent Clp protease adapter protein ClpS"/>
    <property type="match status" value="1"/>
</dbReference>
<dbReference type="Gene3D" id="3.30.1390.10">
    <property type="match status" value="1"/>
</dbReference>
<dbReference type="HAMAP" id="MF_00302">
    <property type="entry name" value="ClpS"/>
    <property type="match status" value="1"/>
</dbReference>
<dbReference type="InterPro" id="IPR022935">
    <property type="entry name" value="ClpS"/>
</dbReference>
<dbReference type="InterPro" id="IPR003769">
    <property type="entry name" value="ClpS_core"/>
</dbReference>
<dbReference type="InterPro" id="IPR014719">
    <property type="entry name" value="Ribosomal_bL12_C/ClpS-like"/>
</dbReference>
<dbReference type="NCBIfam" id="NF000669">
    <property type="entry name" value="PRK00033.1-2"/>
    <property type="match status" value="1"/>
</dbReference>
<dbReference type="NCBIfam" id="NF000672">
    <property type="entry name" value="PRK00033.1-5"/>
    <property type="match status" value="1"/>
</dbReference>
<dbReference type="PANTHER" id="PTHR33473:SF19">
    <property type="entry name" value="ATP-DEPENDENT CLP PROTEASE ADAPTER PROTEIN CLPS"/>
    <property type="match status" value="1"/>
</dbReference>
<dbReference type="PANTHER" id="PTHR33473">
    <property type="entry name" value="ATP-DEPENDENT CLP PROTEASE ADAPTER PROTEIN CLPS1, CHLOROPLASTIC"/>
    <property type="match status" value="1"/>
</dbReference>
<dbReference type="Pfam" id="PF02617">
    <property type="entry name" value="ClpS"/>
    <property type="match status" value="1"/>
</dbReference>
<dbReference type="SUPFAM" id="SSF54736">
    <property type="entry name" value="ClpS-like"/>
    <property type="match status" value="1"/>
</dbReference>
<accession>Q607H2</accession>
<gene>
    <name evidence="1" type="primary">clpS</name>
    <name type="ordered locus">MCA1788</name>
</gene>
<name>CLPS_METCA</name>
<sequence>MSQESDHGSGDGLALQEAQPKVKRPPLYKVMLLNDDFTPMEFVVHVLMLFFGMNEEKATQVMLHVHTRGVGVCGVFSKDVAETKVQQVNAHARQNQHPLLCTMEEA</sequence>
<comment type="function">
    <text evidence="1">Involved in the modulation of the specificity of the ClpAP-mediated ATP-dependent protein degradation.</text>
</comment>
<comment type="subunit">
    <text evidence="1">Binds to the N-terminal domain of the chaperone ClpA.</text>
</comment>
<comment type="similarity">
    <text evidence="1">Belongs to the ClpS family.</text>
</comment>
<evidence type="ECO:0000255" key="1">
    <source>
        <dbReference type="HAMAP-Rule" id="MF_00302"/>
    </source>
</evidence>
<protein>
    <recommendedName>
        <fullName evidence="1">ATP-dependent Clp protease adapter protein ClpS</fullName>
    </recommendedName>
</protein>
<organism>
    <name type="scientific">Methylococcus capsulatus (strain ATCC 33009 / NCIMB 11132 / Bath)</name>
    <dbReference type="NCBI Taxonomy" id="243233"/>
    <lineage>
        <taxon>Bacteria</taxon>
        <taxon>Pseudomonadati</taxon>
        <taxon>Pseudomonadota</taxon>
        <taxon>Gammaproteobacteria</taxon>
        <taxon>Methylococcales</taxon>
        <taxon>Methylococcaceae</taxon>
        <taxon>Methylococcus</taxon>
    </lineage>
</organism>
<reference key="1">
    <citation type="journal article" date="2004" name="PLoS Biol.">
        <title>Genomic insights into methanotrophy: the complete genome sequence of Methylococcus capsulatus (Bath).</title>
        <authorList>
            <person name="Ward N.L."/>
            <person name="Larsen O."/>
            <person name="Sakwa J."/>
            <person name="Bruseth L."/>
            <person name="Khouri H.M."/>
            <person name="Durkin A.S."/>
            <person name="Dimitrov G."/>
            <person name="Jiang L."/>
            <person name="Scanlan D."/>
            <person name="Kang K.H."/>
            <person name="Lewis M.R."/>
            <person name="Nelson K.E."/>
            <person name="Methe B.A."/>
            <person name="Wu M."/>
            <person name="Heidelberg J.F."/>
            <person name="Paulsen I.T."/>
            <person name="Fouts D.E."/>
            <person name="Ravel J."/>
            <person name="Tettelin H."/>
            <person name="Ren Q."/>
            <person name="Read T.D."/>
            <person name="DeBoy R.T."/>
            <person name="Seshadri R."/>
            <person name="Salzberg S.L."/>
            <person name="Jensen H.B."/>
            <person name="Birkeland N.K."/>
            <person name="Nelson W.C."/>
            <person name="Dodson R.J."/>
            <person name="Grindhaug S.H."/>
            <person name="Holt I.E."/>
            <person name="Eidhammer I."/>
            <person name="Jonasen I."/>
            <person name="Vanaken S."/>
            <person name="Utterback T.R."/>
            <person name="Feldblyum T.V."/>
            <person name="Fraser C.M."/>
            <person name="Lillehaug J.R."/>
            <person name="Eisen J.A."/>
        </authorList>
    </citation>
    <scope>NUCLEOTIDE SEQUENCE [LARGE SCALE GENOMIC DNA]</scope>
    <source>
        <strain>ATCC 33009 / NCIMB 11132 / Bath</strain>
    </source>
</reference>
<feature type="chain" id="PRO_0000215722" description="ATP-dependent Clp protease adapter protein ClpS">
    <location>
        <begin position="1"/>
        <end position="106"/>
    </location>
</feature>
<proteinExistence type="inferred from homology"/>